<name>PYRG_THIDA</name>
<dbReference type="EC" id="6.3.4.2" evidence="1"/>
<dbReference type="EMBL" id="CP000116">
    <property type="protein sequence ID" value="AAZ96572.1"/>
    <property type="molecule type" value="Genomic_DNA"/>
</dbReference>
<dbReference type="RefSeq" id="WP_011311131.1">
    <property type="nucleotide sequence ID" value="NC_007404.1"/>
</dbReference>
<dbReference type="SMR" id="Q3SL45"/>
<dbReference type="STRING" id="292415.Tbd_0619"/>
<dbReference type="MEROPS" id="C26.964"/>
<dbReference type="KEGG" id="tbd:Tbd_0619"/>
<dbReference type="eggNOG" id="COG0504">
    <property type="taxonomic scope" value="Bacteria"/>
</dbReference>
<dbReference type="HOGENOM" id="CLU_011675_5_0_4"/>
<dbReference type="OrthoDB" id="9801107at2"/>
<dbReference type="UniPathway" id="UPA00159">
    <property type="reaction ID" value="UER00277"/>
</dbReference>
<dbReference type="Proteomes" id="UP000008291">
    <property type="component" value="Chromosome"/>
</dbReference>
<dbReference type="GO" id="GO:0005829">
    <property type="term" value="C:cytosol"/>
    <property type="evidence" value="ECO:0007669"/>
    <property type="project" value="TreeGrafter"/>
</dbReference>
<dbReference type="GO" id="GO:0005524">
    <property type="term" value="F:ATP binding"/>
    <property type="evidence" value="ECO:0007669"/>
    <property type="project" value="UniProtKB-KW"/>
</dbReference>
<dbReference type="GO" id="GO:0003883">
    <property type="term" value="F:CTP synthase activity"/>
    <property type="evidence" value="ECO:0007669"/>
    <property type="project" value="UniProtKB-UniRule"/>
</dbReference>
<dbReference type="GO" id="GO:0004359">
    <property type="term" value="F:glutaminase activity"/>
    <property type="evidence" value="ECO:0007669"/>
    <property type="project" value="RHEA"/>
</dbReference>
<dbReference type="GO" id="GO:0042802">
    <property type="term" value="F:identical protein binding"/>
    <property type="evidence" value="ECO:0007669"/>
    <property type="project" value="TreeGrafter"/>
</dbReference>
<dbReference type="GO" id="GO:0046872">
    <property type="term" value="F:metal ion binding"/>
    <property type="evidence" value="ECO:0007669"/>
    <property type="project" value="UniProtKB-KW"/>
</dbReference>
<dbReference type="GO" id="GO:0044210">
    <property type="term" value="P:'de novo' CTP biosynthetic process"/>
    <property type="evidence" value="ECO:0007669"/>
    <property type="project" value="UniProtKB-UniRule"/>
</dbReference>
<dbReference type="GO" id="GO:0019856">
    <property type="term" value="P:pyrimidine nucleobase biosynthetic process"/>
    <property type="evidence" value="ECO:0007669"/>
    <property type="project" value="TreeGrafter"/>
</dbReference>
<dbReference type="CDD" id="cd03113">
    <property type="entry name" value="CTPS_N"/>
    <property type="match status" value="1"/>
</dbReference>
<dbReference type="CDD" id="cd01746">
    <property type="entry name" value="GATase1_CTP_Synthase"/>
    <property type="match status" value="1"/>
</dbReference>
<dbReference type="FunFam" id="3.40.50.300:FF:000009">
    <property type="entry name" value="CTP synthase"/>
    <property type="match status" value="1"/>
</dbReference>
<dbReference type="FunFam" id="3.40.50.880:FF:000002">
    <property type="entry name" value="CTP synthase"/>
    <property type="match status" value="1"/>
</dbReference>
<dbReference type="Gene3D" id="3.40.50.880">
    <property type="match status" value="1"/>
</dbReference>
<dbReference type="Gene3D" id="3.40.50.300">
    <property type="entry name" value="P-loop containing nucleotide triphosphate hydrolases"/>
    <property type="match status" value="1"/>
</dbReference>
<dbReference type="HAMAP" id="MF_01227">
    <property type="entry name" value="PyrG"/>
    <property type="match status" value="1"/>
</dbReference>
<dbReference type="InterPro" id="IPR029062">
    <property type="entry name" value="Class_I_gatase-like"/>
</dbReference>
<dbReference type="InterPro" id="IPR004468">
    <property type="entry name" value="CTP_synthase"/>
</dbReference>
<dbReference type="InterPro" id="IPR017456">
    <property type="entry name" value="CTP_synthase_N"/>
</dbReference>
<dbReference type="InterPro" id="IPR017926">
    <property type="entry name" value="GATASE"/>
</dbReference>
<dbReference type="InterPro" id="IPR033828">
    <property type="entry name" value="GATase1_CTP_Synthase"/>
</dbReference>
<dbReference type="InterPro" id="IPR027417">
    <property type="entry name" value="P-loop_NTPase"/>
</dbReference>
<dbReference type="NCBIfam" id="NF003792">
    <property type="entry name" value="PRK05380.1"/>
    <property type="match status" value="1"/>
</dbReference>
<dbReference type="NCBIfam" id="TIGR00337">
    <property type="entry name" value="PyrG"/>
    <property type="match status" value="1"/>
</dbReference>
<dbReference type="PANTHER" id="PTHR11550">
    <property type="entry name" value="CTP SYNTHASE"/>
    <property type="match status" value="1"/>
</dbReference>
<dbReference type="PANTHER" id="PTHR11550:SF0">
    <property type="entry name" value="CTP SYNTHASE-RELATED"/>
    <property type="match status" value="1"/>
</dbReference>
<dbReference type="Pfam" id="PF06418">
    <property type="entry name" value="CTP_synth_N"/>
    <property type="match status" value="1"/>
</dbReference>
<dbReference type="Pfam" id="PF00117">
    <property type="entry name" value="GATase"/>
    <property type="match status" value="1"/>
</dbReference>
<dbReference type="SUPFAM" id="SSF52317">
    <property type="entry name" value="Class I glutamine amidotransferase-like"/>
    <property type="match status" value="1"/>
</dbReference>
<dbReference type="SUPFAM" id="SSF52540">
    <property type="entry name" value="P-loop containing nucleoside triphosphate hydrolases"/>
    <property type="match status" value="1"/>
</dbReference>
<dbReference type="PROSITE" id="PS51273">
    <property type="entry name" value="GATASE_TYPE_1"/>
    <property type="match status" value="1"/>
</dbReference>
<gene>
    <name evidence="1" type="primary">pyrG</name>
    <name type="ordered locus">Tbd_0619</name>
</gene>
<comment type="function">
    <text evidence="1">Catalyzes the ATP-dependent amination of UTP to CTP with either L-glutamine or ammonia as the source of nitrogen. Regulates intracellular CTP levels through interactions with the four ribonucleotide triphosphates.</text>
</comment>
<comment type="catalytic activity">
    <reaction evidence="1">
        <text>UTP + L-glutamine + ATP + H2O = CTP + L-glutamate + ADP + phosphate + 2 H(+)</text>
        <dbReference type="Rhea" id="RHEA:26426"/>
        <dbReference type="ChEBI" id="CHEBI:15377"/>
        <dbReference type="ChEBI" id="CHEBI:15378"/>
        <dbReference type="ChEBI" id="CHEBI:29985"/>
        <dbReference type="ChEBI" id="CHEBI:30616"/>
        <dbReference type="ChEBI" id="CHEBI:37563"/>
        <dbReference type="ChEBI" id="CHEBI:43474"/>
        <dbReference type="ChEBI" id="CHEBI:46398"/>
        <dbReference type="ChEBI" id="CHEBI:58359"/>
        <dbReference type="ChEBI" id="CHEBI:456216"/>
        <dbReference type="EC" id="6.3.4.2"/>
    </reaction>
</comment>
<comment type="catalytic activity">
    <reaction evidence="1">
        <text>L-glutamine + H2O = L-glutamate + NH4(+)</text>
        <dbReference type="Rhea" id="RHEA:15889"/>
        <dbReference type="ChEBI" id="CHEBI:15377"/>
        <dbReference type="ChEBI" id="CHEBI:28938"/>
        <dbReference type="ChEBI" id="CHEBI:29985"/>
        <dbReference type="ChEBI" id="CHEBI:58359"/>
    </reaction>
</comment>
<comment type="catalytic activity">
    <reaction evidence="1">
        <text>UTP + NH4(+) + ATP = CTP + ADP + phosphate + 2 H(+)</text>
        <dbReference type="Rhea" id="RHEA:16597"/>
        <dbReference type="ChEBI" id="CHEBI:15378"/>
        <dbReference type="ChEBI" id="CHEBI:28938"/>
        <dbReference type="ChEBI" id="CHEBI:30616"/>
        <dbReference type="ChEBI" id="CHEBI:37563"/>
        <dbReference type="ChEBI" id="CHEBI:43474"/>
        <dbReference type="ChEBI" id="CHEBI:46398"/>
        <dbReference type="ChEBI" id="CHEBI:456216"/>
    </reaction>
</comment>
<comment type="activity regulation">
    <text evidence="1">Allosterically activated by GTP, when glutamine is the substrate; GTP has no effect on the reaction when ammonia is the substrate. The allosteric effector GTP functions by stabilizing the protein conformation that binds the tetrahedral intermediate(s) formed during glutamine hydrolysis. Inhibited by the product CTP, via allosteric rather than competitive inhibition.</text>
</comment>
<comment type="pathway">
    <text evidence="1">Pyrimidine metabolism; CTP biosynthesis via de novo pathway; CTP from UDP: step 2/2.</text>
</comment>
<comment type="subunit">
    <text evidence="1">Homotetramer.</text>
</comment>
<comment type="miscellaneous">
    <text evidence="1">CTPSs have evolved a hybrid strategy for distinguishing between UTP and CTP. The overlapping regions of the product feedback inhibitory and substrate sites recognize a common feature in both compounds, the triphosphate moiety. To differentiate isosteric substrate and product pyrimidine rings, an additional pocket far from the expected kinase/ligase catalytic site, specifically recognizes the cytosine and ribose portions of the product inhibitor.</text>
</comment>
<comment type="similarity">
    <text evidence="1">Belongs to the CTP synthase family.</text>
</comment>
<organism>
    <name type="scientific">Thiobacillus denitrificans (strain ATCC 25259 / T1)</name>
    <dbReference type="NCBI Taxonomy" id="292415"/>
    <lineage>
        <taxon>Bacteria</taxon>
        <taxon>Pseudomonadati</taxon>
        <taxon>Pseudomonadota</taxon>
        <taxon>Betaproteobacteria</taxon>
        <taxon>Nitrosomonadales</taxon>
        <taxon>Thiobacillaceae</taxon>
        <taxon>Thiobacillus</taxon>
    </lineage>
</organism>
<proteinExistence type="inferred from homology"/>
<evidence type="ECO:0000255" key="1">
    <source>
        <dbReference type="HAMAP-Rule" id="MF_01227"/>
    </source>
</evidence>
<accession>Q3SL45</accession>
<reference key="1">
    <citation type="journal article" date="2006" name="J. Bacteriol.">
        <title>The genome sequence of the obligately chemolithoautotrophic, facultatively anaerobic bacterium Thiobacillus denitrificans.</title>
        <authorList>
            <person name="Beller H.R."/>
            <person name="Chain P.S."/>
            <person name="Letain T.E."/>
            <person name="Chakicherla A."/>
            <person name="Larimer F.W."/>
            <person name="Richardson P.M."/>
            <person name="Coleman M.A."/>
            <person name="Wood A.P."/>
            <person name="Kelly D.P."/>
        </authorList>
    </citation>
    <scope>NUCLEOTIDE SEQUENCE [LARGE SCALE GENOMIC DNA]</scope>
    <source>
        <strain>ATCC 25259 / T1</strain>
    </source>
</reference>
<feature type="chain" id="PRO_0000266252" description="CTP synthase">
    <location>
        <begin position="1"/>
        <end position="546"/>
    </location>
</feature>
<feature type="domain" description="Glutamine amidotransferase type-1" evidence="1">
    <location>
        <begin position="290"/>
        <end position="543"/>
    </location>
</feature>
<feature type="region of interest" description="Amidoligase domain" evidence="1">
    <location>
        <begin position="1"/>
        <end position="265"/>
    </location>
</feature>
<feature type="active site" description="Nucleophile; for glutamine hydrolysis" evidence="1">
    <location>
        <position position="378"/>
    </location>
</feature>
<feature type="active site" evidence="1">
    <location>
        <position position="516"/>
    </location>
</feature>
<feature type="active site" evidence="1">
    <location>
        <position position="518"/>
    </location>
</feature>
<feature type="binding site" evidence="1">
    <location>
        <position position="13"/>
    </location>
    <ligand>
        <name>CTP</name>
        <dbReference type="ChEBI" id="CHEBI:37563"/>
        <note>allosteric inhibitor</note>
    </ligand>
</feature>
<feature type="binding site" evidence="1">
    <location>
        <position position="13"/>
    </location>
    <ligand>
        <name>UTP</name>
        <dbReference type="ChEBI" id="CHEBI:46398"/>
    </ligand>
</feature>
<feature type="binding site" evidence="1">
    <location>
        <begin position="14"/>
        <end position="19"/>
    </location>
    <ligand>
        <name>ATP</name>
        <dbReference type="ChEBI" id="CHEBI:30616"/>
    </ligand>
</feature>
<feature type="binding site" evidence="1">
    <location>
        <position position="71"/>
    </location>
    <ligand>
        <name>ATP</name>
        <dbReference type="ChEBI" id="CHEBI:30616"/>
    </ligand>
</feature>
<feature type="binding site" evidence="1">
    <location>
        <position position="71"/>
    </location>
    <ligand>
        <name>Mg(2+)</name>
        <dbReference type="ChEBI" id="CHEBI:18420"/>
    </ligand>
</feature>
<feature type="binding site" evidence="1">
    <location>
        <position position="139"/>
    </location>
    <ligand>
        <name>Mg(2+)</name>
        <dbReference type="ChEBI" id="CHEBI:18420"/>
    </ligand>
</feature>
<feature type="binding site" evidence="1">
    <location>
        <begin position="146"/>
        <end position="148"/>
    </location>
    <ligand>
        <name>CTP</name>
        <dbReference type="ChEBI" id="CHEBI:37563"/>
        <note>allosteric inhibitor</note>
    </ligand>
</feature>
<feature type="binding site" evidence="1">
    <location>
        <begin position="186"/>
        <end position="191"/>
    </location>
    <ligand>
        <name>CTP</name>
        <dbReference type="ChEBI" id="CHEBI:37563"/>
        <note>allosteric inhibitor</note>
    </ligand>
</feature>
<feature type="binding site" evidence="1">
    <location>
        <begin position="186"/>
        <end position="191"/>
    </location>
    <ligand>
        <name>UTP</name>
        <dbReference type="ChEBI" id="CHEBI:46398"/>
    </ligand>
</feature>
<feature type="binding site" evidence="1">
    <location>
        <position position="222"/>
    </location>
    <ligand>
        <name>CTP</name>
        <dbReference type="ChEBI" id="CHEBI:37563"/>
        <note>allosteric inhibitor</note>
    </ligand>
</feature>
<feature type="binding site" evidence="1">
    <location>
        <position position="222"/>
    </location>
    <ligand>
        <name>UTP</name>
        <dbReference type="ChEBI" id="CHEBI:46398"/>
    </ligand>
</feature>
<feature type="binding site" evidence="1">
    <location>
        <position position="351"/>
    </location>
    <ligand>
        <name>L-glutamine</name>
        <dbReference type="ChEBI" id="CHEBI:58359"/>
    </ligand>
</feature>
<feature type="binding site" evidence="1">
    <location>
        <begin position="379"/>
        <end position="382"/>
    </location>
    <ligand>
        <name>L-glutamine</name>
        <dbReference type="ChEBI" id="CHEBI:58359"/>
    </ligand>
</feature>
<feature type="binding site" evidence="1">
    <location>
        <position position="402"/>
    </location>
    <ligand>
        <name>L-glutamine</name>
        <dbReference type="ChEBI" id="CHEBI:58359"/>
    </ligand>
</feature>
<feature type="binding site" evidence="1">
    <location>
        <position position="469"/>
    </location>
    <ligand>
        <name>L-glutamine</name>
        <dbReference type="ChEBI" id="CHEBI:58359"/>
    </ligand>
</feature>
<protein>
    <recommendedName>
        <fullName evidence="1">CTP synthase</fullName>
        <ecNumber evidence="1">6.3.4.2</ecNumber>
    </recommendedName>
    <alternativeName>
        <fullName evidence="1">Cytidine 5'-triphosphate synthase</fullName>
    </alternativeName>
    <alternativeName>
        <fullName evidence="1">Cytidine triphosphate synthetase</fullName>
        <shortName evidence="1">CTP synthetase</shortName>
        <shortName evidence="1">CTPS</shortName>
    </alternativeName>
    <alternativeName>
        <fullName evidence="1">UTP--ammonia ligase</fullName>
    </alternativeName>
</protein>
<keyword id="KW-0067">ATP-binding</keyword>
<keyword id="KW-0315">Glutamine amidotransferase</keyword>
<keyword id="KW-0436">Ligase</keyword>
<keyword id="KW-0460">Magnesium</keyword>
<keyword id="KW-0479">Metal-binding</keyword>
<keyword id="KW-0547">Nucleotide-binding</keyword>
<keyword id="KW-0665">Pyrimidine biosynthesis</keyword>
<keyword id="KW-1185">Reference proteome</keyword>
<sequence length="546" mass="60184">MTKYVFVTGGVVSSLGKGIASASLAALLESRGLRVTLLKLDPYINVDPGTMSPFQHGEVFVTDDGAETDLDLGHYERFSSARMSKRNNFTTGQIYKSVIDKERRGDYLGGTVQVIPHITDEIKLSIREGAKGADVALVEIGGTVGDIESLPFLEAIRQMGFEDGPANTCFIHLTLLPYIPTAGELKTKPTQHSVKELREIGIQPDILLCRADREIPLDERRKIALFTNVRPEAVIEVLDADSIYKIPAMLHEQMLDEIVCHKLNILARAADLSVWKRLVDALEHPEHTVNIAFVGKYVDLTESYKSLSEAMIHAGMHTKSRVKIHYVDSEQIEKSGVDCLRGMDAILVPGGFGKRGVEGKIAAIRYARENRVPYLGICLGMQLAVVEFARDVAGMADAQSTEFDPTTNHPVIGLITEWLDRTGQVEKRSEQSDLGGTMRLGGQPCTLKNGTLAREIYGADSIVERHRHRYEVNNTLLSELEAKGLVVAGRAPGTELCEMVELPPAVHPWFVGCQFHPEFTSNPRNGHPLFISFVRAALAHQQKDSA</sequence>